<comment type="similarity">
    <text evidence="1">Belongs to the bacterial ribosomal protein bL36 family.</text>
</comment>
<protein>
    <recommendedName>
        <fullName evidence="1">Large ribosomal subunit protein bL36</fullName>
    </recommendedName>
    <alternativeName>
        <fullName evidence="2">50S ribosomal protein L36</fullName>
    </alternativeName>
</protein>
<organism>
    <name type="scientific">Brucella suis biovar 1 (strain 1330)</name>
    <dbReference type="NCBI Taxonomy" id="204722"/>
    <lineage>
        <taxon>Bacteria</taxon>
        <taxon>Pseudomonadati</taxon>
        <taxon>Pseudomonadota</taxon>
        <taxon>Alphaproteobacteria</taxon>
        <taxon>Hyphomicrobiales</taxon>
        <taxon>Brucellaceae</taxon>
        <taxon>Brucella/Ochrobactrum group</taxon>
        <taxon>Brucella</taxon>
    </lineage>
</organism>
<dbReference type="EMBL" id="AE014291">
    <property type="protein sequence ID" value="AAN30645.1"/>
    <property type="molecule type" value="Genomic_DNA"/>
</dbReference>
<dbReference type="EMBL" id="CP002997">
    <property type="protein sequence ID" value="AEM19062.1"/>
    <property type="molecule type" value="Genomic_DNA"/>
</dbReference>
<dbReference type="SMR" id="P66287"/>
<dbReference type="KEGG" id="bms:BR1746"/>
<dbReference type="KEGG" id="bsi:BS1330_I1740"/>
<dbReference type="PATRIC" id="fig|204722.21.peg.3173"/>
<dbReference type="HOGENOM" id="CLU_135723_3_2_5"/>
<dbReference type="Proteomes" id="UP000007104">
    <property type="component" value="Chromosome I"/>
</dbReference>
<dbReference type="GO" id="GO:1990904">
    <property type="term" value="C:ribonucleoprotein complex"/>
    <property type="evidence" value="ECO:0007669"/>
    <property type="project" value="UniProtKB-KW"/>
</dbReference>
<dbReference type="GO" id="GO:0005840">
    <property type="term" value="C:ribosome"/>
    <property type="evidence" value="ECO:0007669"/>
    <property type="project" value="UniProtKB-KW"/>
</dbReference>
<dbReference type="GO" id="GO:0003735">
    <property type="term" value="F:structural constituent of ribosome"/>
    <property type="evidence" value="ECO:0007669"/>
    <property type="project" value="InterPro"/>
</dbReference>
<dbReference type="GO" id="GO:0006412">
    <property type="term" value="P:translation"/>
    <property type="evidence" value="ECO:0007669"/>
    <property type="project" value="UniProtKB-UniRule"/>
</dbReference>
<dbReference type="HAMAP" id="MF_00251">
    <property type="entry name" value="Ribosomal_bL36"/>
    <property type="match status" value="1"/>
</dbReference>
<dbReference type="InterPro" id="IPR000473">
    <property type="entry name" value="Ribosomal_bL36"/>
</dbReference>
<dbReference type="InterPro" id="IPR035977">
    <property type="entry name" value="Ribosomal_bL36_sp"/>
</dbReference>
<dbReference type="InterPro" id="IPR047621">
    <property type="entry name" value="Ribosomal_L36_bact"/>
</dbReference>
<dbReference type="NCBIfam" id="NF002021">
    <property type="entry name" value="PRK00831.1"/>
    <property type="match status" value="1"/>
</dbReference>
<dbReference type="NCBIfam" id="TIGR01022">
    <property type="entry name" value="rpmJ_bact"/>
    <property type="match status" value="1"/>
</dbReference>
<dbReference type="PANTHER" id="PTHR47781">
    <property type="entry name" value="50S RIBOSOMAL PROTEIN L36 2"/>
    <property type="match status" value="1"/>
</dbReference>
<dbReference type="PANTHER" id="PTHR47781:SF1">
    <property type="entry name" value="LARGE RIBOSOMAL SUBUNIT PROTEIN BL36B"/>
    <property type="match status" value="1"/>
</dbReference>
<dbReference type="Pfam" id="PF00444">
    <property type="entry name" value="Ribosomal_L36"/>
    <property type="match status" value="1"/>
</dbReference>
<dbReference type="SUPFAM" id="SSF57840">
    <property type="entry name" value="Ribosomal protein L36"/>
    <property type="match status" value="1"/>
</dbReference>
<dbReference type="PROSITE" id="PS00828">
    <property type="entry name" value="RIBOSOMAL_L36"/>
    <property type="match status" value="1"/>
</dbReference>
<proteinExistence type="inferred from homology"/>
<sequence length="41" mass="4851">MKIKNSLKALKARHRDCQLVRRKGRVYIINKTAPRFKARQG</sequence>
<gene>
    <name evidence="1" type="primary">rpmJ</name>
    <name type="ordered locus">BR1746</name>
    <name type="ordered locus">BS1330_I1740</name>
</gene>
<name>RL36_BRUSU</name>
<reference key="1">
    <citation type="journal article" date="2002" name="Proc. Natl. Acad. Sci. U.S.A.">
        <title>The Brucella suis genome reveals fundamental similarities between animal and plant pathogens and symbionts.</title>
        <authorList>
            <person name="Paulsen I.T."/>
            <person name="Seshadri R."/>
            <person name="Nelson K.E."/>
            <person name="Eisen J.A."/>
            <person name="Heidelberg J.F."/>
            <person name="Read T.D."/>
            <person name="Dodson R.J."/>
            <person name="Umayam L.A."/>
            <person name="Brinkac L.M."/>
            <person name="Beanan M.J."/>
            <person name="Daugherty S.C."/>
            <person name="DeBoy R.T."/>
            <person name="Durkin A.S."/>
            <person name="Kolonay J.F."/>
            <person name="Madupu R."/>
            <person name="Nelson W.C."/>
            <person name="Ayodeji B."/>
            <person name="Kraul M."/>
            <person name="Shetty J."/>
            <person name="Malek J.A."/>
            <person name="Van Aken S.E."/>
            <person name="Riedmuller S."/>
            <person name="Tettelin H."/>
            <person name="Gill S.R."/>
            <person name="White O."/>
            <person name="Salzberg S.L."/>
            <person name="Hoover D.L."/>
            <person name="Lindler L.E."/>
            <person name="Halling S.M."/>
            <person name="Boyle S.M."/>
            <person name="Fraser C.M."/>
        </authorList>
    </citation>
    <scope>NUCLEOTIDE SEQUENCE [LARGE SCALE GENOMIC DNA]</scope>
    <source>
        <strain>1330</strain>
    </source>
</reference>
<reference key="2">
    <citation type="journal article" date="2011" name="J. Bacteriol.">
        <title>Revised genome sequence of Brucella suis 1330.</title>
        <authorList>
            <person name="Tae H."/>
            <person name="Shallom S."/>
            <person name="Settlage R."/>
            <person name="Preston D."/>
            <person name="Adams L.G."/>
            <person name="Garner H.R."/>
        </authorList>
    </citation>
    <scope>NUCLEOTIDE SEQUENCE [LARGE SCALE GENOMIC DNA]</scope>
    <source>
        <strain>1330</strain>
    </source>
</reference>
<keyword id="KW-0687">Ribonucleoprotein</keyword>
<keyword id="KW-0689">Ribosomal protein</keyword>
<evidence type="ECO:0000255" key="1">
    <source>
        <dbReference type="HAMAP-Rule" id="MF_00251"/>
    </source>
</evidence>
<evidence type="ECO:0000305" key="2"/>
<accession>P66287</accession>
<accession>G0K786</accession>
<accession>Q8YIZ3</accession>
<feature type="chain" id="PRO_0000126160" description="Large ribosomal subunit protein bL36">
    <location>
        <begin position="1"/>
        <end position="41"/>
    </location>
</feature>